<organism>
    <name type="scientific">Mus musculus</name>
    <name type="common">Mouse</name>
    <dbReference type="NCBI Taxonomy" id="10090"/>
    <lineage>
        <taxon>Eukaryota</taxon>
        <taxon>Metazoa</taxon>
        <taxon>Chordata</taxon>
        <taxon>Craniata</taxon>
        <taxon>Vertebrata</taxon>
        <taxon>Euteleostomi</taxon>
        <taxon>Mammalia</taxon>
        <taxon>Eutheria</taxon>
        <taxon>Euarchontoglires</taxon>
        <taxon>Glires</taxon>
        <taxon>Rodentia</taxon>
        <taxon>Myomorpha</taxon>
        <taxon>Muroidea</taxon>
        <taxon>Muridae</taxon>
        <taxon>Murinae</taxon>
        <taxon>Mus</taxon>
        <taxon>Mus</taxon>
    </lineage>
</organism>
<protein>
    <recommendedName>
        <fullName evidence="3">Cytoplasmic 60S subunit biogenesis factor ZNF622</fullName>
    </recommendedName>
    <alternativeName>
        <fullName>Zinc finger protein 622</fullName>
    </alternativeName>
</protein>
<comment type="function">
    <text evidence="1">Pre-60S-associated cytoplasmic factor involved in the cytoplasmic maturation of the 60S subunit.</text>
</comment>
<comment type="subunit">
    <text evidence="1">Homo- and heterodimer. Associates with pre-60S ribosomal particles. Interacts with MELK and MYBL2. Interacts with DNAJC21.</text>
</comment>
<comment type="subcellular location">
    <subcellularLocation>
        <location evidence="1">Cytoplasm</location>
    </subcellularLocation>
    <subcellularLocation>
        <location evidence="1">Nucleus</location>
    </subcellularLocation>
</comment>
<comment type="PTM">
    <text evidence="1">Phosphorylated by MELK. The phosphorylation may redirect the protein to the nucleus.</text>
</comment>
<comment type="PTM">
    <text evidence="1">Ubiquitinated by HECTD1, leading to its degradation.</text>
</comment>
<comment type="similarity">
    <text evidence="3">Belongs to the REI1 family.</text>
</comment>
<evidence type="ECO:0000250" key="1">
    <source>
        <dbReference type="UniProtKB" id="Q969S3"/>
    </source>
</evidence>
<evidence type="ECO:0000256" key="2">
    <source>
        <dbReference type="SAM" id="MobiDB-lite"/>
    </source>
</evidence>
<evidence type="ECO:0000305" key="3"/>
<name>ZN622_MOUSE</name>
<keyword id="KW-0007">Acetylation</keyword>
<keyword id="KW-0963">Cytoplasm</keyword>
<keyword id="KW-0479">Metal-binding</keyword>
<keyword id="KW-0539">Nucleus</keyword>
<keyword id="KW-0597">Phosphoprotein</keyword>
<keyword id="KW-1185">Reference proteome</keyword>
<keyword id="KW-0677">Repeat</keyword>
<keyword id="KW-0690">Ribosome biogenesis</keyword>
<keyword id="KW-0832">Ubl conjugation</keyword>
<keyword id="KW-0862">Zinc</keyword>
<keyword id="KW-0863">Zinc-finger</keyword>
<reference key="1">
    <citation type="journal article" date="2005" name="Science">
        <title>The transcriptional landscape of the mammalian genome.</title>
        <authorList>
            <person name="Carninci P."/>
            <person name="Kasukawa T."/>
            <person name="Katayama S."/>
            <person name="Gough J."/>
            <person name="Frith M.C."/>
            <person name="Maeda N."/>
            <person name="Oyama R."/>
            <person name="Ravasi T."/>
            <person name="Lenhard B."/>
            <person name="Wells C."/>
            <person name="Kodzius R."/>
            <person name="Shimokawa K."/>
            <person name="Bajic V.B."/>
            <person name="Brenner S.E."/>
            <person name="Batalov S."/>
            <person name="Forrest A.R."/>
            <person name="Zavolan M."/>
            <person name="Davis M.J."/>
            <person name="Wilming L.G."/>
            <person name="Aidinis V."/>
            <person name="Allen J.E."/>
            <person name="Ambesi-Impiombato A."/>
            <person name="Apweiler R."/>
            <person name="Aturaliya R.N."/>
            <person name="Bailey T.L."/>
            <person name="Bansal M."/>
            <person name="Baxter L."/>
            <person name="Beisel K.W."/>
            <person name="Bersano T."/>
            <person name="Bono H."/>
            <person name="Chalk A.M."/>
            <person name="Chiu K.P."/>
            <person name="Choudhary V."/>
            <person name="Christoffels A."/>
            <person name="Clutterbuck D.R."/>
            <person name="Crowe M.L."/>
            <person name="Dalla E."/>
            <person name="Dalrymple B.P."/>
            <person name="de Bono B."/>
            <person name="Della Gatta G."/>
            <person name="di Bernardo D."/>
            <person name="Down T."/>
            <person name="Engstrom P."/>
            <person name="Fagiolini M."/>
            <person name="Faulkner G."/>
            <person name="Fletcher C.F."/>
            <person name="Fukushima T."/>
            <person name="Furuno M."/>
            <person name="Futaki S."/>
            <person name="Gariboldi M."/>
            <person name="Georgii-Hemming P."/>
            <person name="Gingeras T.R."/>
            <person name="Gojobori T."/>
            <person name="Green R.E."/>
            <person name="Gustincich S."/>
            <person name="Harbers M."/>
            <person name="Hayashi Y."/>
            <person name="Hensch T.K."/>
            <person name="Hirokawa N."/>
            <person name="Hill D."/>
            <person name="Huminiecki L."/>
            <person name="Iacono M."/>
            <person name="Ikeo K."/>
            <person name="Iwama A."/>
            <person name="Ishikawa T."/>
            <person name="Jakt M."/>
            <person name="Kanapin A."/>
            <person name="Katoh M."/>
            <person name="Kawasawa Y."/>
            <person name="Kelso J."/>
            <person name="Kitamura H."/>
            <person name="Kitano H."/>
            <person name="Kollias G."/>
            <person name="Krishnan S.P."/>
            <person name="Kruger A."/>
            <person name="Kummerfeld S.K."/>
            <person name="Kurochkin I.V."/>
            <person name="Lareau L.F."/>
            <person name="Lazarevic D."/>
            <person name="Lipovich L."/>
            <person name="Liu J."/>
            <person name="Liuni S."/>
            <person name="McWilliam S."/>
            <person name="Madan Babu M."/>
            <person name="Madera M."/>
            <person name="Marchionni L."/>
            <person name="Matsuda H."/>
            <person name="Matsuzawa S."/>
            <person name="Miki H."/>
            <person name="Mignone F."/>
            <person name="Miyake S."/>
            <person name="Morris K."/>
            <person name="Mottagui-Tabar S."/>
            <person name="Mulder N."/>
            <person name="Nakano N."/>
            <person name="Nakauchi H."/>
            <person name="Ng P."/>
            <person name="Nilsson R."/>
            <person name="Nishiguchi S."/>
            <person name="Nishikawa S."/>
            <person name="Nori F."/>
            <person name="Ohara O."/>
            <person name="Okazaki Y."/>
            <person name="Orlando V."/>
            <person name="Pang K.C."/>
            <person name="Pavan W.J."/>
            <person name="Pavesi G."/>
            <person name="Pesole G."/>
            <person name="Petrovsky N."/>
            <person name="Piazza S."/>
            <person name="Reed J."/>
            <person name="Reid J.F."/>
            <person name="Ring B.Z."/>
            <person name="Ringwald M."/>
            <person name="Rost B."/>
            <person name="Ruan Y."/>
            <person name="Salzberg S.L."/>
            <person name="Sandelin A."/>
            <person name="Schneider C."/>
            <person name="Schoenbach C."/>
            <person name="Sekiguchi K."/>
            <person name="Semple C.A."/>
            <person name="Seno S."/>
            <person name="Sessa L."/>
            <person name="Sheng Y."/>
            <person name="Shibata Y."/>
            <person name="Shimada H."/>
            <person name="Shimada K."/>
            <person name="Silva D."/>
            <person name="Sinclair B."/>
            <person name="Sperling S."/>
            <person name="Stupka E."/>
            <person name="Sugiura K."/>
            <person name="Sultana R."/>
            <person name="Takenaka Y."/>
            <person name="Taki K."/>
            <person name="Tammoja K."/>
            <person name="Tan S.L."/>
            <person name="Tang S."/>
            <person name="Taylor M.S."/>
            <person name="Tegner J."/>
            <person name="Teichmann S.A."/>
            <person name="Ueda H.R."/>
            <person name="van Nimwegen E."/>
            <person name="Verardo R."/>
            <person name="Wei C.L."/>
            <person name="Yagi K."/>
            <person name="Yamanishi H."/>
            <person name="Zabarovsky E."/>
            <person name="Zhu S."/>
            <person name="Zimmer A."/>
            <person name="Hide W."/>
            <person name="Bult C."/>
            <person name="Grimmond S.M."/>
            <person name="Teasdale R.D."/>
            <person name="Liu E.T."/>
            <person name="Brusic V."/>
            <person name="Quackenbush J."/>
            <person name="Wahlestedt C."/>
            <person name="Mattick J.S."/>
            <person name="Hume D.A."/>
            <person name="Kai C."/>
            <person name="Sasaki D."/>
            <person name="Tomaru Y."/>
            <person name="Fukuda S."/>
            <person name="Kanamori-Katayama M."/>
            <person name="Suzuki M."/>
            <person name="Aoki J."/>
            <person name="Arakawa T."/>
            <person name="Iida J."/>
            <person name="Imamura K."/>
            <person name="Itoh M."/>
            <person name="Kato T."/>
            <person name="Kawaji H."/>
            <person name="Kawagashira N."/>
            <person name="Kawashima T."/>
            <person name="Kojima M."/>
            <person name="Kondo S."/>
            <person name="Konno H."/>
            <person name="Nakano K."/>
            <person name="Ninomiya N."/>
            <person name="Nishio T."/>
            <person name="Okada M."/>
            <person name="Plessy C."/>
            <person name="Shibata K."/>
            <person name="Shiraki T."/>
            <person name="Suzuki S."/>
            <person name="Tagami M."/>
            <person name="Waki K."/>
            <person name="Watahiki A."/>
            <person name="Okamura-Oho Y."/>
            <person name="Suzuki H."/>
            <person name="Kawai J."/>
            <person name="Hayashizaki Y."/>
        </authorList>
    </citation>
    <scope>NUCLEOTIDE SEQUENCE [LARGE SCALE MRNA]</scope>
    <source>
        <strain>C57BL/6J</strain>
        <tissue>Forelimb</tissue>
    </source>
</reference>
<reference key="2">
    <citation type="journal article" date="2004" name="Genome Res.">
        <title>The status, quality, and expansion of the NIH full-length cDNA project: the Mammalian Gene Collection (MGC).</title>
        <authorList>
            <consortium name="The MGC Project Team"/>
        </authorList>
    </citation>
    <scope>NUCLEOTIDE SEQUENCE [LARGE SCALE MRNA]</scope>
    <source>
        <tissue>Mammary tumor</tissue>
    </source>
</reference>
<reference key="3">
    <citation type="journal article" date="2010" name="Cell">
        <title>A tissue-specific atlas of mouse protein phosphorylation and expression.</title>
        <authorList>
            <person name="Huttlin E.L."/>
            <person name="Jedrychowski M.P."/>
            <person name="Elias J.E."/>
            <person name="Goswami T."/>
            <person name="Rad R."/>
            <person name="Beausoleil S.A."/>
            <person name="Villen J."/>
            <person name="Haas W."/>
            <person name="Sowa M.E."/>
            <person name="Gygi S.P."/>
        </authorList>
    </citation>
    <scope>IDENTIFICATION BY MASS SPECTROMETRY [LARGE SCALE ANALYSIS]</scope>
    <source>
        <tissue>Spleen</tissue>
        <tissue>Testis</tissue>
    </source>
</reference>
<sequence>MAALTCITCRVAFRDAELQRAHYKTDWHRYNLRRKVAAMAPVTAEGFQERVRAQRAVAEAAEASKGAATYCTACGKKFATFNAYENHLGSRRHAELERKAVRAASRRVELLNAKNLEKGLGADGVDKDAVNAAIQQAIKAQPSTSPKKAPFVPTDECGRAAAGARGVPERDPTEKPPRLQWFEQQAKKLAKQQWEDGEEEGEEEEEDDEDEDWEDIDSDDGLECEDPGVEDQDAEDAAAEESPPLGAIPITDCLFCSHHSSSLVKNVAHMTKVHSFFIPDIEYLSDLKGLIKYLGEKVGVGKICLWCNEKGKSFYSTEAVQAHMNDKSHCKLFTDGDAALEFADFYDFRSSYPDYKEGQDPAELEALSTDKILECDDETMELILPSGARVGHRSLMRYYKQRFGLPRAVTVARNQKAVGRVLQQYRALGWMGSTGAALMRERDMQYVQRMKSKWMLKIGMKNNATKQMHFRAQVRF</sequence>
<feature type="initiator methionine" description="Removed" evidence="1">
    <location>
        <position position="1"/>
    </location>
</feature>
<feature type="chain" id="PRO_0000191816" description="Cytoplasmic 60S subunit biogenesis factor ZNF622">
    <location>
        <begin position="2"/>
        <end position="476"/>
    </location>
</feature>
<feature type="zinc finger region" description="U1-type 1">
    <location>
        <begin position="4"/>
        <end position="28"/>
    </location>
</feature>
<feature type="zinc finger region" description="U1-type 2">
    <location>
        <begin position="69"/>
        <end position="93"/>
    </location>
</feature>
<feature type="region of interest" description="Disordered" evidence="2">
    <location>
        <begin position="137"/>
        <end position="243"/>
    </location>
</feature>
<feature type="compositionally biased region" description="Basic and acidic residues" evidence="2">
    <location>
        <begin position="167"/>
        <end position="177"/>
    </location>
</feature>
<feature type="compositionally biased region" description="Acidic residues" evidence="2">
    <location>
        <begin position="195"/>
        <end position="239"/>
    </location>
</feature>
<feature type="modified residue" description="N-acetylalanine" evidence="1">
    <location>
        <position position="2"/>
    </location>
</feature>
<feature type="modified residue" description="Phosphoserine" evidence="1">
    <location>
        <position position="275"/>
    </location>
</feature>
<dbReference type="EMBL" id="AK031232">
    <property type="protein sequence ID" value="BAC27310.1"/>
    <property type="molecule type" value="mRNA"/>
</dbReference>
<dbReference type="EMBL" id="BC006964">
    <property type="protein sequence ID" value="AAH06964.1"/>
    <property type="molecule type" value="mRNA"/>
</dbReference>
<dbReference type="CCDS" id="CCDS27400.1"/>
<dbReference type="RefSeq" id="NP_653106.1">
    <property type="nucleotide sequence ID" value="NM_144523.2"/>
</dbReference>
<dbReference type="SMR" id="Q91VY9"/>
<dbReference type="BioGRID" id="206636">
    <property type="interactions" value="2"/>
</dbReference>
<dbReference type="FunCoup" id="Q91VY9">
    <property type="interactions" value="3316"/>
</dbReference>
<dbReference type="IntAct" id="Q91VY9">
    <property type="interactions" value="1"/>
</dbReference>
<dbReference type="STRING" id="10090.ENSMUSP00000059678"/>
<dbReference type="GlyGen" id="Q91VY9">
    <property type="glycosylation" value="1 site"/>
</dbReference>
<dbReference type="iPTMnet" id="Q91VY9"/>
<dbReference type="PhosphoSitePlus" id="Q91VY9"/>
<dbReference type="PaxDb" id="10090-ENSMUSP00000059678"/>
<dbReference type="ProteomicsDB" id="299592"/>
<dbReference type="Pumba" id="Q91VY9"/>
<dbReference type="Antibodypedia" id="22565">
    <property type="antibodies" value="176 antibodies from 23 providers"/>
</dbReference>
<dbReference type="Ensembl" id="ENSMUST00000061875.8">
    <property type="protein sequence ID" value="ENSMUSP00000059678.7"/>
    <property type="gene ID" value="ENSMUSG00000052253.7"/>
</dbReference>
<dbReference type="GeneID" id="52521"/>
<dbReference type="KEGG" id="mmu:52521"/>
<dbReference type="UCSC" id="uc007vjk.1">
    <property type="organism name" value="mouse"/>
</dbReference>
<dbReference type="AGR" id="MGI:1289282"/>
<dbReference type="CTD" id="52521"/>
<dbReference type="MGI" id="MGI:1289282">
    <property type="gene designation" value="Zfp622"/>
</dbReference>
<dbReference type="VEuPathDB" id="HostDB:ENSMUSG00000052253"/>
<dbReference type="eggNOG" id="KOG2785">
    <property type="taxonomic scope" value="Eukaryota"/>
</dbReference>
<dbReference type="GeneTree" id="ENSGT00390000018047"/>
<dbReference type="HOGENOM" id="CLU_018787_0_2_1"/>
<dbReference type="InParanoid" id="Q91VY9"/>
<dbReference type="OMA" id="WTQTQQQ"/>
<dbReference type="OrthoDB" id="19329at2759"/>
<dbReference type="PhylomeDB" id="Q91VY9"/>
<dbReference type="TreeFam" id="TF313094"/>
<dbReference type="BioGRID-ORCS" id="52521">
    <property type="hits" value="21 hits in 66 CRISPR screens"/>
</dbReference>
<dbReference type="ChiTaRS" id="Zfp622">
    <property type="organism name" value="mouse"/>
</dbReference>
<dbReference type="PRO" id="PR:Q91VY9"/>
<dbReference type="Proteomes" id="UP000000589">
    <property type="component" value="Chromosome 15"/>
</dbReference>
<dbReference type="RNAct" id="Q91VY9">
    <property type="molecule type" value="protein"/>
</dbReference>
<dbReference type="Bgee" id="ENSMUSG00000052253">
    <property type="expression patterns" value="Expressed in paneth cell and 249 other cell types or tissues"/>
</dbReference>
<dbReference type="ExpressionAtlas" id="Q91VY9">
    <property type="expression patterns" value="baseline and differential"/>
</dbReference>
<dbReference type="GO" id="GO:0005829">
    <property type="term" value="C:cytosol"/>
    <property type="evidence" value="ECO:0007669"/>
    <property type="project" value="Ensembl"/>
</dbReference>
<dbReference type="GO" id="GO:0005794">
    <property type="term" value="C:Golgi apparatus"/>
    <property type="evidence" value="ECO:0007669"/>
    <property type="project" value="Ensembl"/>
</dbReference>
<dbReference type="GO" id="GO:0005730">
    <property type="term" value="C:nucleolus"/>
    <property type="evidence" value="ECO:0007669"/>
    <property type="project" value="Ensembl"/>
</dbReference>
<dbReference type="GO" id="GO:0005654">
    <property type="term" value="C:nucleoplasm"/>
    <property type="evidence" value="ECO:0007669"/>
    <property type="project" value="Ensembl"/>
</dbReference>
<dbReference type="GO" id="GO:0003676">
    <property type="term" value="F:nucleic acid binding"/>
    <property type="evidence" value="ECO:0007669"/>
    <property type="project" value="InterPro"/>
</dbReference>
<dbReference type="GO" id="GO:1990275">
    <property type="term" value="F:preribosome binding"/>
    <property type="evidence" value="ECO:0000250"/>
    <property type="project" value="UniProtKB"/>
</dbReference>
<dbReference type="GO" id="GO:0008270">
    <property type="term" value="F:zinc ion binding"/>
    <property type="evidence" value="ECO:0007669"/>
    <property type="project" value="UniProtKB-KW"/>
</dbReference>
<dbReference type="GO" id="GO:0008631">
    <property type="term" value="P:intrinsic apoptotic signaling pathway in response to oxidative stress"/>
    <property type="evidence" value="ECO:0007669"/>
    <property type="project" value="Ensembl"/>
</dbReference>
<dbReference type="GO" id="GO:0043065">
    <property type="term" value="P:positive regulation of apoptotic process"/>
    <property type="evidence" value="ECO:0007669"/>
    <property type="project" value="Ensembl"/>
</dbReference>
<dbReference type="GO" id="GO:0046330">
    <property type="term" value="P:positive regulation of JNK cascade"/>
    <property type="evidence" value="ECO:0007669"/>
    <property type="project" value="Ensembl"/>
</dbReference>
<dbReference type="GO" id="GO:0042273">
    <property type="term" value="P:ribosomal large subunit biogenesis"/>
    <property type="evidence" value="ECO:0000250"/>
    <property type="project" value="UniProtKB"/>
</dbReference>
<dbReference type="FunFam" id="3.30.160.60:FF:000915">
    <property type="entry name" value="Zinc finger protein 622"/>
    <property type="match status" value="1"/>
</dbReference>
<dbReference type="InterPro" id="IPR003604">
    <property type="entry name" value="Matrin/U1-like-C_Znf_C2H2"/>
</dbReference>
<dbReference type="InterPro" id="IPR041661">
    <property type="entry name" value="ZN622/Rei1/Reh1_Znf-C2H2"/>
</dbReference>
<dbReference type="InterPro" id="IPR040025">
    <property type="entry name" value="Znf622/Rei1/Reh1"/>
</dbReference>
<dbReference type="InterPro" id="IPR036236">
    <property type="entry name" value="Znf_C2H2_sf"/>
</dbReference>
<dbReference type="InterPro" id="IPR013087">
    <property type="entry name" value="Znf_C2H2_type"/>
</dbReference>
<dbReference type="PANTHER" id="PTHR13182:SF8">
    <property type="entry name" value="CYTOPLASMIC 60S SUBUNIT BIOGENESIS FACTOR ZNF622"/>
    <property type="match status" value="1"/>
</dbReference>
<dbReference type="PANTHER" id="PTHR13182">
    <property type="entry name" value="ZINC FINGER PROTEIN 622"/>
    <property type="match status" value="1"/>
</dbReference>
<dbReference type="Pfam" id="PF12756">
    <property type="entry name" value="zf-C2H2_2"/>
    <property type="match status" value="1"/>
</dbReference>
<dbReference type="SMART" id="SM00355">
    <property type="entry name" value="ZnF_C2H2"/>
    <property type="match status" value="4"/>
</dbReference>
<dbReference type="SMART" id="SM00451">
    <property type="entry name" value="ZnF_U1"/>
    <property type="match status" value="2"/>
</dbReference>
<dbReference type="SUPFAM" id="SSF57667">
    <property type="entry name" value="beta-beta-alpha zinc fingers"/>
    <property type="match status" value="2"/>
</dbReference>
<gene>
    <name type="primary">Znf622</name>
    <name type="synonym">D15Ertd806e</name>
    <name type="synonym">Zfp622</name>
</gene>
<proteinExistence type="evidence at protein level"/>
<accession>Q91VY9</accession>